<gene>
    <name evidence="1" type="primary">tsaD</name>
    <name type="synonym">gcp</name>
    <name type="ordered locus">Syncc9902_1727</name>
</gene>
<name>TSAD_SYNS9</name>
<accession>Q3AWM4</accession>
<feature type="chain" id="PRO_0000303585" description="tRNA N6-adenosine threonylcarbamoyltransferase">
    <location>
        <begin position="1"/>
        <end position="357"/>
    </location>
</feature>
<feature type="binding site" evidence="1">
    <location>
        <position position="116"/>
    </location>
    <ligand>
        <name>Fe cation</name>
        <dbReference type="ChEBI" id="CHEBI:24875"/>
    </ligand>
</feature>
<feature type="binding site" evidence="1">
    <location>
        <position position="120"/>
    </location>
    <ligand>
        <name>Fe cation</name>
        <dbReference type="ChEBI" id="CHEBI:24875"/>
    </ligand>
</feature>
<feature type="binding site" evidence="1">
    <location>
        <begin position="139"/>
        <end position="143"/>
    </location>
    <ligand>
        <name>substrate</name>
    </ligand>
</feature>
<feature type="binding site" evidence="1">
    <location>
        <position position="172"/>
    </location>
    <ligand>
        <name>substrate</name>
    </ligand>
</feature>
<feature type="binding site" evidence="1">
    <location>
        <position position="185"/>
    </location>
    <ligand>
        <name>substrate</name>
    </ligand>
</feature>
<feature type="binding site" evidence="1">
    <location>
        <position position="284"/>
    </location>
    <ligand>
        <name>substrate</name>
    </ligand>
</feature>
<feature type="binding site" evidence="1">
    <location>
        <position position="312"/>
    </location>
    <ligand>
        <name>Fe cation</name>
        <dbReference type="ChEBI" id="CHEBI:24875"/>
    </ligand>
</feature>
<protein>
    <recommendedName>
        <fullName evidence="1">tRNA N6-adenosine threonylcarbamoyltransferase</fullName>
        <ecNumber evidence="1">2.3.1.234</ecNumber>
    </recommendedName>
    <alternativeName>
        <fullName evidence="1">N6-L-threonylcarbamoyladenine synthase</fullName>
        <shortName evidence="1">t(6)A synthase</shortName>
    </alternativeName>
    <alternativeName>
        <fullName evidence="1">t(6)A37 threonylcarbamoyladenosine biosynthesis protein TsaD</fullName>
    </alternativeName>
    <alternativeName>
        <fullName evidence="1">tRNA threonylcarbamoyladenosine biosynthesis protein TsaD</fullName>
    </alternativeName>
</protein>
<dbReference type="EC" id="2.3.1.234" evidence="1"/>
<dbReference type="EMBL" id="CP000097">
    <property type="protein sequence ID" value="ABB26684.1"/>
    <property type="molecule type" value="Genomic_DNA"/>
</dbReference>
<dbReference type="RefSeq" id="WP_011360492.1">
    <property type="nucleotide sequence ID" value="NC_007513.1"/>
</dbReference>
<dbReference type="SMR" id="Q3AWM4"/>
<dbReference type="STRING" id="316279.Syncc9902_1727"/>
<dbReference type="KEGG" id="sye:Syncc9902_1727"/>
<dbReference type="eggNOG" id="COG0533">
    <property type="taxonomic scope" value="Bacteria"/>
</dbReference>
<dbReference type="HOGENOM" id="CLU_023208_0_2_3"/>
<dbReference type="OrthoDB" id="9806197at2"/>
<dbReference type="Proteomes" id="UP000002712">
    <property type="component" value="Chromosome"/>
</dbReference>
<dbReference type="GO" id="GO:0005737">
    <property type="term" value="C:cytoplasm"/>
    <property type="evidence" value="ECO:0007669"/>
    <property type="project" value="UniProtKB-SubCell"/>
</dbReference>
<dbReference type="GO" id="GO:0005506">
    <property type="term" value="F:iron ion binding"/>
    <property type="evidence" value="ECO:0007669"/>
    <property type="project" value="UniProtKB-UniRule"/>
</dbReference>
<dbReference type="GO" id="GO:0061711">
    <property type="term" value="F:N(6)-L-threonylcarbamoyladenine synthase activity"/>
    <property type="evidence" value="ECO:0007669"/>
    <property type="project" value="UniProtKB-EC"/>
</dbReference>
<dbReference type="GO" id="GO:0002949">
    <property type="term" value="P:tRNA threonylcarbamoyladenosine modification"/>
    <property type="evidence" value="ECO:0007669"/>
    <property type="project" value="UniProtKB-UniRule"/>
</dbReference>
<dbReference type="CDD" id="cd24133">
    <property type="entry name" value="ASKHA_NBD_TsaD_bac"/>
    <property type="match status" value="1"/>
</dbReference>
<dbReference type="FunFam" id="3.30.420.40:FF:000040">
    <property type="entry name" value="tRNA N6-adenosine threonylcarbamoyltransferase"/>
    <property type="match status" value="1"/>
</dbReference>
<dbReference type="Gene3D" id="3.30.420.40">
    <property type="match status" value="2"/>
</dbReference>
<dbReference type="HAMAP" id="MF_01445">
    <property type="entry name" value="TsaD"/>
    <property type="match status" value="1"/>
</dbReference>
<dbReference type="InterPro" id="IPR043129">
    <property type="entry name" value="ATPase_NBD"/>
</dbReference>
<dbReference type="InterPro" id="IPR000905">
    <property type="entry name" value="Gcp-like_dom"/>
</dbReference>
<dbReference type="InterPro" id="IPR017861">
    <property type="entry name" value="KAE1/TsaD"/>
</dbReference>
<dbReference type="InterPro" id="IPR017860">
    <property type="entry name" value="Peptidase_M22_CS"/>
</dbReference>
<dbReference type="InterPro" id="IPR022450">
    <property type="entry name" value="TsaD"/>
</dbReference>
<dbReference type="NCBIfam" id="TIGR00329">
    <property type="entry name" value="gcp_kae1"/>
    <property type="match status" value="1"/>
</dbReference>
<dbReference type="NCBIfam" id="TIGR03723">
    <property type="entry name" value="T6A_TsaD_YgjD"/>
    <property type="match status" value="1"/>
</dbReference>
<dbReference type="PANTHER" id="PTHR11735">
    <property type="entry name" value="TRNA N6-ADENOSINE THREONYLCARBAMOYLTRANSFERASE"/>
    <property type="match status" value="1"/>
</dbReference>
<dbReference type="PANTHER" id="PTHR11735:SF6">
    <property type="entry name" value="TRNA N6-ADENOSINE THREONYLCARBAMOYLTRANSFERASE, MITOCHONDRIAL"/>
    <property type="match status" value="1"/>
</dbReference>
<dbReference type="Pfam" id="PF00814">
    <property type="entry name" value="TsaD"/>
    <property type="match status" value="1"/>
</dbReference>
<dbReference type="PRINTS" id="PR00789">
    <property type="entry name" value="OSIALOPTASE"/>
</dbReference>
<dbReference type="SUPFAM" id="SSF53067">
    <property type="entry name" value="Actin-like ATPase domain"/>
    <property type="match status" value="2"/>
</dbReference>
<dbReference type="PROSITE" id="PS01016">
    <property type="entry name" value="GLYCOPROTEASE"/>
    <property type="match status" value="1"/>
</dbReference>
<keyword id="KW-0012">Acyltransferase</keyword>
<keyword id="KW-0963">Cytoplasm</keyword>
<keyword id="KW-0408">Iron</keyword>
<keyword id="KW-0479">Metal-binding</keyword>
<keyword id="KW-1185">Reference proteome</keyword>
<keyword id="KW-0808">Transferase</keyword>
<keyword id="KW-0819">tRNA processing</keyword>
<proteinExistence type="inferred from homology"/>
<evidence type="ECO:0000255" key="1">
    <source>
        <dbReference type="HAMAP-Rule" id="MF_01445"/>
    </source>
</evidence>
<reference key="1">
    <citation type="submission" date="2005-08" db="EMBL/GenBank/DDBJ databases">
        <title>Complete sequence of Synechococcus sp. CC9902.</title>
        <authorList>
            <person name="Copeland A."/>
            <person name="Lucas S."/>
            <person name="Lapidus A."/>
            <person name="Barry K."/>
            <person name="Detter J.C."/>
            <person name="Glavina T."/>
            <person name="Hammon N."/>
            <person name="Israni S."/>
            <person name="Pitluck S."/>
            <person name="Martinez M."/>
            <person name="Schmutz J."/>
            <person name="Larimer F."/>
            <person name="Land M."/>
            <person name="Kyrpides N."/>
            <person name="Ivanova N."/>
            <person name="Richardson P."/>
        </authorList>
    </citation>
    <scope>NUCLEOTIDE SEQUENCE [LARGE SCALE GENOMIC DNA]</scope>
    <source>
        <strain>CC9902</strain>
    </source>
</reference>
<comment type="function">
    <text evidence="1">Required for the formation of a threonylcarbamoyl group on adenosine at position 37 (t(6)A37) in tRNAs that read codons beginning with adenine. Is involved in the transfer of the threonylcarbamoyl moiety of threonylcarbamoyl-AMP (TC-AMP) to the N6 group of A37, together with TsaE and TsaB. TsaD likely plays a direct catalytic role in this reaction.</text>
</comment>
<comment type="catalytic activity">
    <reaction evidence="1">
        <text>L-threonylcarbamoyladenylate + adenosine(37) in tRNA = N(6)-L-threonylcarbamoyladenosine(37) in tRNA + AMP + H(+)</text>
        <dbReference type="Rhea" id="RHEA:37059"/>
        <dbReference type="Rhea" id="RHEA-COMP:10162"/>
        <dbReference type="Rhea" id="RHEA-COMP:10163"/>
        <dbReference type="ChEBI" id="CHEBI:15378"/>
        <dbReference type="ChEBI" id="CHEBI:73682"/>
        <dbReference type="ChEBI" id="CHEBI:74411"/>
        <dbReference type="ChEBI" id="CHEBI:74418"/>
        <dbReference type="ChEBI" id="CHEBI:456215"/>
        <dbReference type="EC" id="2.3.1.234"/>
    </reaction>
</comment>
<comment type="cofactor">
    <cofactor evidence="1">
        <name>Fe(2+)</name>
        <dbReference type="ChEBI" id="CHEBI:29033"/>
    </cofactor>
    <text evidence="1">Binds 1 Fe(2+) ion per subunit.</text>
</comment>
<comment type="subcellular location">
    <subcellularLocation>
        <location evidence="1">Cytoplasm</location>
    </subcellularLocation>
</comment>
<comment type="similarity">
    <text evidence="1">Belongs to the KAE1 / TsaD family.</text>
</comment>
<organism>
    <name type="scientific">Synechococcus sp. (strain CC9902)</name>
    <dbReference type="NCBI Taxonomy" id="316279"/>
    <lineage>
        <taxon>Bacteria</taxon>
        <taxon>Bacillati</taxon>
        <taxon>Cyanobacteriota</taxon>
        <taxon>Cyanophyceae</taxon>
        <taxon>Synechococcales</taxon>
        <taxon>Synechococcaceae</taxon>
        <taxon>Synechococcus</taxon>
    </lineage>
</organism>
<sequence length="357" mass="37158">MQTVLALETSCDESAAAVVRHKADGSVEVLASRIASQVEEHALWGGVVPEIASRRHVEALPALVQEVLRESALSISELNAVAATVAPGLAGALMVASVTGRTLAALHQVPFLGIHHLEGHLASAALGEQAPAPPYLVLLVSGGHTELIRVGLNGEMERLGRSHDDAAGEAFDKVARLLGLGYPGGPAIQAIAVSGNAKRFSLPKGRISLRGGGFHPYDFSFSGLKTAMLRTVESCQSSGGDLPLADLAASFEQVVADVLVERAIRCALDHNLTQLVMVGGVAANQRLRLLMAKQGKQHGVAISIAPLAYCTDNAAMIGAAALNRLSRGVLSSSDETGVAARWPLERADALYDASPAF</sequence>